<reference key="1">
    <citation type="journal article" date="2000" name="J. Biol. Chem.">
        <title>Fibrillarin genes encode both a conserved nucleolar protein and a novel small nucleolar RNA involved in ribosomal RNA methylation in Arabidopsis thaliana.</title>
        <authorList>
            <person name="Barneche F."/>
            <person name="Steinmetz F."/>
            <person name="Echeverria M."/>
        </authorList>
    </citation>
    <scope>NUCLEOTIDE SEQUENCE [GENOMIC DNA / MRNA]</scope>
    <scope>FUNCTION</scope>
    <scope>CATALYTIC ACTIVITY</scope>
    <scope>SUBCELLULAR LOCATION</scope>
    <scope>TISSUE SPECIFICITY</scope>
    <source>
        <strain>cv. Columbia</strain>
    </source>
</reference>
<reference key="2">
    <citation type="journal article" date="2000" name="Plant Physiol.">
        <title>Molecular cloning and targeting of a fibrillarin homolog from Arabidopsis.</title>
        <authorList>
            <person name="Pih K.T."/>
            <person name="Yi M.J."/>
            <person name="Liang Y.S."/>
            <person name="Shin B.J."/>
            <person name="Cho M.J."/>
            <person name="Hwang I."/>
            <person name="Son D."/>
        </authorList>
    </citation>
    <scope>NUCLEOTIDE SEQUENCE [MRNA]</scope>
    <scope>TISSUE SPECIFICITY</scope>
    <scope>INDUCTION</scope>
    <scope>SUBCELLULAR LOCATION</scope>
    <scope>DOMAIN</scope>
</reference>
<reference key="3">
    <citation type="journal article" date="2000" name="DNA Res.">
        <title>Structural analysis of Arabidopsis thaliana chromosome 5. X. Sequence features of the regions of 3,076,755 bp covered by sixty P1 and TAC clones.</title>
        <authorList>
            <person name="Sato S."/>
            <person name="Nakamura Y."/>
            <person name="Kaneko T."/>
            <person name="Katoh T."/>
            <person name="Asamizu E."/>
            <person name="Kotani H."/>
            <person name="Tabata S."/>
        </authorList>
    </citation>
    <scope>NUCLEOTIDE SEQUENCE [LARGE SCALE GENOMIC DNA]</scope>
    <source>
        <strain>cv. Columbia</strain>
    </source>
</reference>
<reference key="4">
    <citation type="journal article" date="2017" name="Plant J.">
        <title>Araport11: a complete reannotation of the Arabidopsis thaliana reference genome.</title>
        <authorList>
            <person name="Cheng C.Y."/>
            <person name="Krishnakumar V."/>
            <person name="Chan A.P."/>
            <person name="Thibaud-Nissen F."/>
            <person name="Schobel S."/>
            <person name="Town C.D."/>
        </authorList>
    </citation>
    <scope>GENOME REANNOTATION</scope>
    <source>
        <strain>cv. Columbia</strain>
    </source>
</reference>
<reference key="5">
    <citation type="journal article" date="2003" name="Science">
        <title>Empirical analysis of transcriptional activity in the Arabidopsis genome.</title>
        <authorList>
            <person name="Yamada K."/>
            <person name="Lim J."/>
            <person name="Dale J.M."/>
            <person name="Chen H."/>
            <person name="Shinn P."/>
            <person name="Palm C.J."/>
            <person name="Southwick A.M."/>
            <person name="Wu H.C."/>
            <person name="Kim C.J."/>
            <person name="Nguyen M."/>
            <person name="Pham P.K."/>
            <person name="Cheuk R.F."/>
            <person name="Karlin-Newmann G."/>
            <person name="Liu S.X."/>
            <person name="Lam B."/>
            <person name="Sakano H."/>
            <person name="Wu T."/>
            <person name="Yu G."/>
            <person name="Miranda M."/>
            <person name="Quach H.L."/>
            <person name="Tripp M."/>
            <person name="Chang C.H."/>
            <person name="Lee J.M."/>
            <person name="Toriumi M.J."/>
            <person name="Chan M.M."/>
            <person name="Tang C.C."/>
            <person name="Onodera C.S."/>
            <person name="Deng J.M."/>
            <person name="Akiyama K."/>
            <person name="Ansari Y."/>
            <person name="Arakawa T."/>
            <person name="Banh J."/>
            <person name="Banno F."/>
            <person name="Bowser L."/>
            <person name="Brooks S.Y."/>
            <person name="Carninci P."/>
            <person name="Chao Q."/>
            <person name="Choy N."/>
            <person name="Enju A."/>
            <person name="Goldsmith A.D."/>
            <person name="Gurjal M."/>
            <person name="Hansen N.F."/>
            <person name="Hayashizaki Y."/>
            <person name="Johnson-Hopson C."/>
            <person name="Hsuan V.W."/>
            <person name="Iida K."/>
            <person name="Karnes M."/>
            <person name="Khan S."/>
            <person name="Koesema E."/>
            <person name="Ishida J."/>
            <person name="Jiang P.X."/>
            <person name="Jones T."/>
            <person name="Kawai J."/>
            <person name="Kamiya A."/>
            <person name="Meyers C."/>
            <person name="Nakajima M."/>
            <person name="Narusaka M."/>
            <person name="Seki M."/>
            <person name="Sakurai T."/>
            <person name="Satou M."/>
            <person name="Tamse R."/>
            <person name="Vaysberg M."/>
            <person name="Wallender E.K."/>
            <person name="Wong C."/>
            <person name="Yamamura Y."/>
            <person name="Yuan S."/>
            <person name="Shinozaki K."/>
            <person name="Davis R.W."/>
            <person name="Theologis A."/>
            <person name="Ecker J.R."/>
        </authorList>
    </citation>
    <scope>NUCLEOTIDE SEQUENCE [LARGE SCALE MRNA]</scope>
    <source>
        <strain>cv. Columbia</strain>
    </source>
</reference>
<reference key="6">
    <citation type="submission" date="2006-07" db="EMBL/GenBank/DDBJ databases">
        <title>Large-scale analysis of RIKEN Arabidopsis full-length (RAFL) cDNAs.</title>
        <authorList>
            <person name="Totoki Y."/>
            <person name="Seki M."/>
            <person name="Ishida J."/>
            <person name="Nakajima M."/>
            <person name="Enju A."/>
            <person name="Kamiya A."/>
            <person name="Narusaka M."/>
            <person name="Shin-i T."/>
            <person name="Nakagawa M."/>
            <person name="Sakamoto N."/>
            <person name="Oishi K."/>
            <person name="Kohara Y."/>
            <person name="Kobayashi M."/>
            <person name="Toyoda A."/>
            <person name="Sakaki Y."/>
            <person name="Sakurai T."/>
            <person name="Iida K."/>
            <person name="Akiyama K."/>
            <person name="Satou M."/>
            <person name="Toyoda T."/>
            <person name="Konagaya A."/>
            <person name="Carninci P."/>
            <person name="Kawai J."/>
            <person name="Hayashizaki Y."/>
            <person name="Shinozaki K."/>
        </authorList>
    </citation>
    <scope>NUCLEOTIDE SEQUENCE [LARGE SCALE MRNA]</scope>
    <source>
        <strain>cv. Columbia</strain>
    </source>
</reference>
<reference key="7">
    <citation type="journal article" date="2001" name="EMBO J.">
        <title>SKP1-SnRK protein kinase interactions mediate proteasomal binding of a plant SCF ubiquitin ligase.</title>
        <authorList>
            <person name="Farras R."/>
            <person name="Ferrando A."/>
            <person name="Jasik J."/>
            <person name="Kleinow T."/>
            <person name="Oekresz L."/>
            <person name="Tiburcio A."/>
            <person name="Salchert K."/>
            <person name="del Pozo C."/>
            <person name="Schell J."/>
            <person name="Koncz C."/>
        </authorList>
    </citation>
    <scope>NUCLEOTIDE SEQUENCE [MRNA] OF 205-308</scope>
    <scope>INTERACTION WITH SKP1A</scope>
</reference>
<reference key="8">
    <citation type="journal article" date="2011" name="Plant Physiol.">
        <title>The Mediator complex in plants: structure, phylogeny, and expression profiling of representative genes in a dicot (Arabidopsis) and a monocot (rice) during reproduction and abiotic stress.</title>
        <authorList>
            <person name="Mathur S."/>
            <person name="Vyas S."/>
            <person name="Kapoor S."/>
            <person name="Tyagi A.K."/>
        </authorList>
    </citation>
    <scope>NOMENCLATURE</scope>
</reference>
<reference key="9">
    <citation type="journal article" date="2017" name="Front. Plant Sci.">
        <title>Novel ribonuclease activity differs between fibrillarins from Arabidopsis thaliana.</title>
        <authorList>
            <person name="Rodriguez-Corona U."/>
            <person name="Pereira-Santana A."/>
            <person name="Sobol M."/>
            <person name="Rodriguez-Zapata L.C."/>
            <person name="Hozak P."/>
            <person name="Castano E."/>
        </authorList>
    </citation>
    <scope>FUNCTION</scope>
</reference>
<dbReference type="EC" id="2.1.1.-" evidence="14"/>
<dbReference type="EMBL" id="AF233443">
    <property type="protein sequence ID" value="AAG10103.1"/>
    <property type="molecule type" value="mRNA"/>
</dbReference>
<dbReference type="EMBL" id="AF265547">
    <property type="protein sequence ID" value="AAG10152.1"/>
    <property type="molecule type" value="Genomic_DNA"/>
</dbReference>
<dbReference type="EMBL" id="AF187871">
    <property type="protein sequence ID" value="AAF00542.1"/>
    <property type="molecule type" value="mRNA"/>
</dbReference>
<dbReference type="EMBL" id="AB019226">
    <property type="protein sequence ID" value="BAB10544.1"/>
    <property type="molecule type" value="Genomic_DNA"/>
</dbReference>
<dbReference type="EMBL" id="CP002688">
    <property type="protein sequence ID" value="AED96217.1"/>
    <property type="molecule type" value="Genomic_DNA"/>
</dbReference>
<dbReference type="EMBL" id="CP002688">
    <property type="protein sequence ID" value="AED96218.1"/>
    <property type="molecule type" value="Genomic_DNA"/>
</dbReference>
<dbReference type="EMBL" id="AY139769">
    <property type="protein sequence ID" value="AAM98088.1"/>
    <property type="molecule type" value="mRNA"/>
</dbReference>
<dbReference type="EMBL" id="BT004541">
    <property type="protein sequence ID" value="AAO42787.1"/>
    <property type="molecule type" value="mRNA"/>
</dbReference>
<dbReference type="EMBL" id="AK230239">
    <property type="protein sequence ID" value="BAF02044.1"/>
    <property type="molecule type" value="mRNA"/>
</dbReference>
<dbReference type="EMBL" id="AF263383">
    <property type="protein sequence ID" value="AAG21982.1"/>
    <property type="status" value="ALT_INIT"/>
    <property type="molecule type" value="mRNA"/>
</dbReference>
<dbReference type="RefSeq" id="NP_001119418.1">
    <molecule id="Q9FEF8-2"/>
    <property type="nucleotide sequence ID" value="NM_001125946.1"/>
</dbReference>
<dbReference type="RefSeq" id="NP_568772.3">
    <molecule id="Q9FEF8-1"/>
    <property type="nucleotide sequence ID" value="NM_124626.5"/>
</dbReference>
<dbReference type="SMR" id="Q9FEF8"/>
<dbReference type="BioGRID" id="20568">
    <property type="interactions" value="86"/>
</dbReference>
<dbReference type="FunCoup" id="Q9FEF8">
    <property type="interactions" value="3577"/>
</dbReference>
<dbReference type="IntAct" id="Q9FEF8">
    <property type="interactions" value="5"/>
</dbReference>
<dbReference type="STRING" id="3702.Q9FEF8"/>
<dbReference type="SwissPalm" id="Q9FEF8"/>
<dbReference type="PaxDb" id="3702-AT5G52470.1"/>
<dbReference type="ProteomicsDB" id="238824">
    <molecule id="Q9FEF8-1"/>
</dbReference>
<dbReference type="EnsemblPlants" id="AT5G52470.1">
    <molecule id="Q9FEF8-1"/>
    <property type="protein sequence ID" value="AT5G52470.1"/>
    <property type="gene ID" value="AT5G52470"/>
</dbReference>
<dbReference type="EnsemblPlants" id="AT5G52470.2">
    <molecule id="Q9FEF8-2"/>
    <property type="protein sequence ID" value="AT5G52470.2"/>
    <property type="gene ID" value="AT5G52470"/>
</dbReference>
<dbReference type="GeneID" id="835323"/>
<dbReference type="Gramene" id="AT5G52470.1">
    <molecule id="Q9FEF8-1"/>
    <property type="protein sequence ID" value="AT5G52470.1"/>
    <property type="gene ID" value="AT5G52470"/>
</dbReference>
<dbReference type="Gramene" id="AT5G52470.2">
    <molecule id="Q9FEF8-2"/>
    <property type="protein sequence ID" value="AT5G52470.2"/>
    <property type="gene ID" value="AT5G52470"/>
</dbReference>
<dbReference type="KEGG" id="ath:AT5G52470"/>
<dbReference type="Araport" id="AT5G52470"/>
<dbReference type="TAIR" id="AT5G52470">
    <property type="gene designation" value="FIB1"/>
</dbReference>
<dbReference type="eggNOG" id="KOG1596">
    <property type="taxonomic scope" value="Eukaryota"/>
</dbReference>
<dbReference type="HOGENOM" id="CLU_059055_1_0_1"/>
<dbReference type="InParanoid" id="Q9FEF8"/>
<dbReference type="OMA" id="HARFNGC"/>
<dbReference type="OrthoDB" id="1859733at2759"/>
<dbReference type="PhylomeDB" id="Q9FEF8"/>
<dbReference type="CD-CODE" id="4299E36E">
    <property type="entry name" value="Nucleolus"/>
</dbReference>
<dbReference type="PRO" id="PR:Q9FEF8"/>
<dbReference type="Proteomes" id="UP000006548">
    <property type="component" value="Chromosome 5"/>
</dbReference>
<dbReference type="ExpressionAtlas" id="Q9FEF8">
    <property type="expression patterns" value="baseline and differential"/>
</dbReference>
<dbReference type="GO" id="GO:0005730">
    <property type="term" value="C:nucleolus"/>
    <property type="evidence" value="ECO:0000314"/>
    <property type="project" value="TAIR"/>
</dbReference>
<dbReference type="GO" id="GO:0009536">
    <property type="term" value="C:plastid"/>
    <property type="evidence" value="ECO:0007005"/>
    <property type="project" value="TAIR"/>
</dbReference>
<dbReference type="GO" id="GO:1990904">
    <property type="term" value="C:ribonucleoprotein complex"/>
    <property type="evidence" value="ECO:0007669"/>
    <property type="project" value="UniProtKB-KW"/>
</dbReference>
<dbReference type="GO" id="GO:0008168">
    <property type="term" value="F:methyltransferase activity"/>
    <property type="evidence" value="ECO:0007669"/>
    <property type="project" value="UniProtKB-KW"/>
</dbReference>
<dbReference type="GO" id="GO:0003729">
    <property type="term" value="F:mRNA binding"/>
    <property type="evidence" value="ECO:0000314"/>
    <property type="project" value="TAIR"/>
</dbReference>
<dbReference type="GO" id="GO:0030515">
    <property type="term" value="F:snoRNA binding"/>
    <property type="evidence" value="ECO:0000250"/>
    <property type="project" value="TAIR"/>
</dbReference>
<dbReference type="GO" id="GO:0032259">
    <property type="term" value="P:methylation"/>
    <property type="evidence" value="ECO:0007669"/>
    <property type="project" value="UniProtKB-KW"/>
</dbReference>
<dbReference type="GO" id="GO:0006364">
    <property type="term" value="P:rRNA processing"/>
    <property type="evidence" value="ECO:0007669"/>
    <property type="project" value="UniProtKB-KW"/>
</dbReference>
<dbReference type="FunFam" id="3.30.200.20:FF:000056">
    <property type="entry name" value="Fibrillarin like 1"/>
    <property type="match status" value="1"/>
</dbReference>
<dbReference type="FunFam" id="3.40.50.150:FF:000001">
    <property type="entry name" value="Fibrillarin like 1"/>
    <property type="match status" value="1"/>
</dbReference>
<dbReference type="Gene3D" id="3.30.200.20">
    <property type="entry name" value="Phosphorylase Kinase, domain 1"/>
    <property type="match status" value="1"/>
</dbReference>
<dbReference type="Gene3D" id="3.40.50.150">
    <property type="entry name" value="Vaccinia Virus protein VP39"/>
    <property type="match status" value="1"/>
</dbReference>
<dbReference type="HAMAP" id="MF_00351">
    <property type="entry name" value="RNA_methyltransf_FlpA"/>
    <property type="match status" value="1"/>
</dbReference>
<dbReference type="InterPro" id="IPR000692">
    <property type="entry name" value="Fibrillarin"/>
</dbReference>
<dbReference type="InterPro" id="IPR029063">
    <property type="entry name" value="SAM-dependent_MTases_sf"/>
</dbReference>
<dbReference type="NCBIfam" id="NF003276">
    <property type="entry name" value="PRK04266.1-2"/>
    <property type="match status" value="1"/>
</dbReference>
<dbReference type="PANTHER" id="PTHR10335:SF0">
    <property type="entry name" value="RRNA 2'-O-METHYLTRANSFERASE FIBRILLARIN 1-RELATED"/>
    <property type="match status" value="1"/>
</dbReference>
<dbReference type="PANTHER" id="PTHR10335">
    <property type="entry name" value="RRNA 2-O-METHYLTRANSFERASE FIBRILLARIN"/>
    <property type="match status" value="1"/>
</dbReference>
<dbReference type="Pfam" id="PF01269">
    <property type="entry name" value="Fibrillarin"/>
    <property type="match status" value="1"/>
</dbReference>
<dbReference type="PIRSF" id="PIRSF006540">
    <property type="entry name" value="Nop17p"/>
    <property type="match status" value="1"/>
</dbReference>
<dbReference type="PRINTS" id="PR00052">
    <property type="entry name" value="FIBRILLARIN"/>
</dbReference>
<dbReference type="SMART" id="SM01206">
    <property type="entry name" value="Fibrillarin"/>
    <property type="match status" value="1"/>
</dbReference>
<dbReference type="SUPFAM" id="SSF53335">
    <property type="entry name" value="S-adenosyl-L-methionine-dependent methyltransferases"/>
    <property type="match status" value="1"/>
</dbReference>
<sequence>MRPPVTGGRGGGGFRGGRDGGGRGFGGGRSFGGGRSGDRGRSGPRGRGRGAPRGRGGPPRGGMKGGSKVIVEPHRHAGVFIAKGKEDALVTKNLVPGEAVYNEKRISVQNEDGTKVEYRVWNPFRSKLAAAILGGVDNIWIKPGAKVLYLGAASGTTVSHVSDLVGPEGCVYAVEFSHRSGRDLVNMAKKRTNVIPIIEDARHPAKYRMLVGMVDVIFSDVAQPDQARILALNASFFLKTGGHFVISIKANCIDSTVAAEAVFQSEVKKLQQEQFKPAEQVTLEPFERDHACVVGGYRMPKKQKTPAS</sequence>
<accession>Q9FEF8</accession>
<accession>B3H6E7</accession>
<accession>Q0WLG3</accession>
<accession>Q9FUZ8</accession>
<accession>Q9SP30</accession>
<evidence type="ECO:0000250" key="1">
    <source>
        <dbReference type="UniProtKB" id="P15646"/>
    </source>
</evidence>
<evidence type="ECO:0000250" key="2">
    <source>
        <dbReference type="UniProtKB" id="P22087"/>
    </source>
</evidence>
<evidence type="ECO:0000250" key="3">
    <source>
        <dbReference type="UniProtKB" id="Q9Y9U3"/>
    </source>
</evidence>
<evidence type="ECO:0000256" key="4">
    <source>
        <dbReference type="SAM" id="MobiDB-lite"/>
    </source>
</evidence>
<evidence type="ECO:0000269" key="5">
    <source>
    </source>
</evidence>
<evidence type="ECO:0000269" key="6">
    <source>
    </source>
</evidence>
<evidence type="ECO:0000269" key="7">
    <source>
    </source>
</evidence>
<evidence type="ECO:0000269" key="8">
    <source>
    </source>
</evidence>
<evidence type="ECO:0000303" key="9">
    <source>
    </source>
</evidence>
<evidence type="ECO:0000303" key="10">
    <source>
    </source>
</evidence>
<evidence type="ECO:0000303" key="11">
    <source>
    </source>
</evidence>
<evidence type="ECO:0000303" key="12">
    <source>
    </source>
</evidence>
<evidence type="ECO:0000305" key="13"/>
<evidence type="ECO:0000305" key="14">
    <source>
    </source>
</evidence>
<evidence type="ECO:0000312" key="15">
    <source>
        <dbReference type="Araport" id="AT5G52470"/>
    </source>
</evidence>
<evidence type="ECO:0000312" key="16">
    <source>
        <dbReference type="EMBL" id="BAB10544.1"/>
    </source>
</evidence>
<proteinExistence type="evidence at protein level"/>
<keyword id="KW-0025">Alternative splicing</keyword>
<keyword id="KW-0489">Methyltransferase</keyword>
<keyword id="KW-0539">Nucleus</keyword>
<keyword id="KW-1185">Reference proteome</keyword>
<keyword id="KW-0687">Ribonucleoprotein</keyword>
<keyword id="KW-0694">RNA-binding</keyword>
<keyword id="KW-0698">rRNA processing</keyword>
<keyword id="KW-0949">S-adenosyl-L-methionine</keyword>
<keyword id="KW-0808">Transferase</keyword>
<feature type="chain" id="PRO_0000148518" description="rRNA 2'-O-methyltransferase fibrillarin 1">
    <location>
        <begin position="1"/>
        <end position="308"/>
    </location>
</feature>
<feature type="region of interest" description="Disordered" evidence="4">
    <location>
        <begin position="1"/>
        <end position="68"/>
    </location>
</feature>
<feature type="compositionally biased region" description="Gly residues" evidence="4">
    <location>
        <begin position="22"/>
        <end position="35"/>
    </location>
</feature>
<feature type="compositionally biased region" description="Basic residues" evidence="4">
    <location>
        <begin position="42"/>
        <end position="52"/>
    </location>
</feature>
<feature type="compositionally biased region" description="Gly residues" evidence="4">
    <location>
        <begin position="53"/>
        <end position="65"/>
    </location>
</feature>
<feature type="binding site" evidence="3">
    <location>
        <begin position="156"/>
        <end position="157"/>
    </location>
    <ligand>
        <name>S-adenosyl-L-methionine</name>
        <dbReference type="ChEBI" id="CHEBI:59789"/>
    </ligand>
</feature>
<feature type="binding site" evidence="2">
    <location>
        <begin position="175"/>
        <end position="176"/>
    </location>
    <ligand>
        <name>S-adenosyl-L-methionine</name>
        <dbReference type="ChEBI" id="CHEBI:59789"/>
    </ligand>
</feature>
<feature type="binding site" evidence="2">
    <location>
        <begin position="200"/>
        <end position="201"/>
    </location>
    <ligand>
        <name>S-adenosyl-L-methionine</name>
        <dbReference type="ChEBI" id="CHEBI:59789"/>
    </ligand>
</feature>
<feature type="binding site" evidence="2">
    <location>
        <begin position="220"/>
        <end position="223"/>
    </location>
    <ligand>
        <name>S-adenosyl-L-methionine</name>
        <dbReference type="ChEBI" id="CHEBI:59789"/>
    </ligand>
</feature>
<feature type="splice variant" id="VSP_043984" description="In isoform 2." evidence="13">
    <original>ARILALNASFFLKTGGHFVISIKANCIDSTVAAEAVFQSEVKKLQQE</original>
    <variation>NLGPECLIFPQNWWTLCYLNQGQLYRLYSCSRSSLPERGEEAATRAV</variation>
    <location>
        <begin position="227"/>
        <end position="273"/>
    </location>
</feature>
<feature type="splice variant" id="VSP_043985" description="In isoform 2." evidence="13">
    <location>
        <begin position="274"/>
        <end position="308"/>
    </location>
</feature>
<feature type="sequence conflict" description="In Ref. 2; AAF00542." evidence="13" ref="2">
    <original>D</original>
    <variation>DLD</variation>
    <location>
        <position position="137"/>
    </location>
</feature>
<feature type="sequence conflict" description="In Ref. 2; AAF00542." evidence="13" ref="2">
    <original>T</original>
    <variation>A</variation>
    <location>
        <position position="305"/>
    </location>
</feature>
<name>FBRL1_ARATH</name>
<gene>
    <name evidence="10" type="primary">FIB1</name>
    <name evidence="9" type="synonym">FBR1</name>
    <name evidence="12" type="synonym">MED36_2</name>
    <name type="synonym">MED36B</name>
    <name evidence="11" type="synonym">SKIP7</name>
    <name evidence="15" type="ordered locus">At5g52470</name>
    <name evidence="16" type="ORF">K24M7.22</name>
</gene>
<protein>
    <recommendedName>
        <fullName>rRNA 2'-O-methyltransferase fibrillarin 1</fullName>
        <shortName evidence="9">AtFbr1</shortName>
        <shortName evidence="10">AtFib1</shortName>
        <ecNumber evidence="14">2.1.1.-</ecNumber>
    </recommendedName>
    <alternativeName>
        <fullName>Fibrillarin-like protein 1</fullName>
    </alternativeName>
    <alternativeName>
        <fullName>Histone-glutamine methyltransferase</fullName>
    </alternativeName>
    <alternativeName>
        <fullName evidence="11">SKP1-interacting partner 7</fullName>
    </alternativeName>
</protein>
<organism>
    <name type="scientific">Arabidopsis thaliana</name>
    <name type="common">Mouse-ear cress</name>
    <dbReference type="NCBI Taxonomy" id="3702"/>
    <lineage>
        <taxon>Eukaryota</taxon>
        <taxon>Viridiplantae</taxon>
        <taxon>Streptophyta</taxon>
        <taxon>Embryophyta</taxon>
        <taxon>Tracheophyta</taxon>
        <taxon>Spermatophyta</taxon>
        <taxon>Magnoliopsida</taxon>
        <taxon>eudicotyledons</taxon>
        <taxon>Gunneridae</taxon>
        <taxon>Pentapetalae</taxon>
        <taxon>rosids</taxon>
        <taxon>malvids</taxon>
        <taxon>Brassicales</taxon>
        <taxon>Brassicaceae</taxon>
        <taxon>Camelineae</taxon>
        <taxon>Arabidopsis</taxon>
    </lineage>
</organism>
<comment type="function">
    <text evidence="1 8 14">S-adenosyl-L-methionine-dependent methyltransferase that has the ability to methylate both RNAs and proteins (Probable). Involved in pre-rRNA processing. Utilizes the methyl donor S-adenosyl-L-methionine to catalyze the site-specific 2'-hydroxyl methylation of ribose moieties in pre-ribosomal RNA (Probable). Site specificity is provided by a guide RNA that base pairs with the substrate (Probable). Methylation occurs at a characteristic distance from the sequence involved in base pairing with the guide RNA (Probable). Also acts as a protein methyltransferase by mediating methylation of 'Gln-105' of histone H2A (H2AQ105me), a modification that impairs binding of the FACT complex and is specifically present at 35S ribosomal DNA locus (By similarity). Binds monophosphate phosphoinositides in vitro (PubMed:29163603).</text>
</comment>
<comment type="catalytic activity">
    <reaction evidence="14">
        <text>a ribonucleotide in rRNA + S-adenosyl-L-methionine = a 2'-O-methylribonucleotide in rRNA + S-adenosyl-L-homocysteine + H(+)</text>
        <dbReference type="Rhea" id="RHEA:48628"/>
        <dbReference type="Rhea" id="RHEA-COMP:12164"/>
        <dbReference type="Rhea" id="RHEA-COMP:12165"/>
        <dbReference type="ChEBI" id="CHEBI:15378"/>
        <dbReference type="ChEBI" id="CHEBI:57856"/>
        <dbReference type="ChEBI" id="CHEBI:59789"/>
        <dbReference type="ChEBI" id="CHEBI:90675"/>
        <dbReference type="ChEBI" id="CHEBI:90676"/>
    </reaction>
    <physiologicalReaction direction="left-to-right" evidence="14">
        <dbReference type="Rhea" id="RHEA:48629"/>
    </physiologicalReaction>
</comment>
<comment type="catalytic activity">
    <reaction evidence="1">
        <text>L-glutaminyl-[histone H2A] + S-adenosyl-L-methionine = N(5)-methyl-L-glutaminyl-[histone H2A] + S-adenosyl-L-homocysteine + H(+)</text>
        <dbReference type="Rhea" id="RHEA:50904"/>
        <dbReference type="Rhea" id="RHEA-COMP:12837"/>
        <dbReference type="Rhea" id="RHEA-COMP:12839"/>
        <dbReference type="ChEBI" id="CHEBI:15378"/>
        <dbReference type="ChEBI" id="CHEBI:30011"/>
        <dbReference type="ChEBI" id="CHEBI:57856"/>
        <dbReference type="ChEBI" id="CHEBI:59789"/>
        <dbReference type="ChEBI" id="CHEBI:61891"/>
    </reaction>
</comment>
<comment type="subunit">
    <text evidence="1 7">Component of box C/D small nucleolar ribonucleoprotein (snoRNP) particles (By similarity). Interacts with SKP1A (PubMed:11387208).</text>
</comment>
<comment type="subcellular location">
    <subcellularLocation>
        <location evidence="5 6">Nucleus</location>
        <location evidence="5 6">Nucleolus</location>
    </subcellularLocation>
    <text evidence="13">Localizes to the fibrillar region of the nucleolus.</text>
</comment>
<comment type="alternative products">
    <event type="alternative splicing"/>
    <isoform>
        <id>Q9FEF8-1</id>
        <name>1</name>
        <sequence type="displayed"/>
    </isoform>
    <isoform>
        <id>Q9FEF8-2</id>
        <name>2</name>
        <sequence type="described" ref="VSP_043984 VSP_043985"/>
    </isoform>
</comment>
<comment type="tissue specificity">
    <text evidence="5 6">Expressed in roots, leaves and flowers (PubMed:10806224, PubMed:10829025). Expressed in stems (PubMed:10829025).</text>
</comment>
<comment type="induction">
    <text evidence="5">Repressed by abscisic acid (ABA).</text>
</comment>
<comment type="domain">
    <text evidence="5">The N-terminal DMA/Gly-rich region (also called GAR domain) is rich in Gly and Arg and functions in nucleolar targeting.</text>
</comment>
<comment type="similarity">
    <text evidence="13">Belongs to the methyltransferase superfamily. Fibrillarin family.</text>
</comment>
<comment type="sequence caution" evidence="13">
    <conflict type="erroneous initiation">
        <sequence resource="EMBL-CDS" id="AAG21982"/>
    </conflict>
    <text>Truncated N-terminus.</text>
</comment>